<comment type="function">
    <text evidence="1">eIF-2 functions in the early steps of protein synthesis by forming a ternary complex with GTP and initiator tRNA.</text>
</comment>
<comment type="catalytic activity">
    <reaction evidence="1">
        <text>GTP + H2O = GDP + phosphate + H(+)</text>
        <dbReference type="Rhea" id="RHEA:19669"/>
        <dbReference type="ChEBI" id="CHEBI:15377"/>
        <dbReference type="ChEBI" id="CHEBI:15378"/>
        <dbReference type="ChEBI" id="CHEBI:37565"/>
        <dbReference type="ChEBI" id="CHEBI:43474"/>
        <dbReference type="ChEBI" id="CHEBI:58189"/>
        <dbReference type="EC" id="3.6.5.3"/>
    </reaction>
</comment>
<comment type="cofactor">
    <cofactor evidence="1">
        <name>Mg(2+)</name>
        <dbReference type="ChEBI" id="CHEBI:18420"/>
    </cofactor>
</comment>
<comment type="subunit">
    <text evidence="1">Heterotrimer composed of an alpha, a beta and a gamma chain.</text>
</comment>
<comment type="similarity">
    <text evidence="1">Belongs to the TRAFAC class translation factor GTPase superfamily. Classic translation factor GTPase family. EIF2G subfamily.</text>
</comment>
<name>IF2G_SULTO</name>
<evidence type="ECO:0000255" key="1">
    <source>
        <dbReference type="HAMAP-Rule" id="MF_00119"/>
    </source>
</evidence>
<reference key="1">
    <citation type="journal article" date="2001" name="DNA Res.">
        <title>Complete genome sequence of an aerobic thermoacidophilic Crenarchaeon, Sulfolobus tokodaii strain7.</title>
        <authorList>
            <person name="Kawarabayasi Y."/>
            <person name="Hino Y."/>
            <person name="Horikawa H."/>
            <person name="Jin-no K."/>
            <person name="Takahashi M."/>
            <person name="Sekine M."/>
            <person name="Baba S."/>
            <person name="Ankai A."/>
            <person name="Kosugi H."/>
            <person name="Hosoyama A."/>
            <person name="Fukui S."/>
            <person name="Nagai Y."/>
            <person name="Nishijima K."/>
            <person name="Otsuka R."/>
            <person name="Nakazawa H."/>
            <person name="Takamiya M."/>
            <person name="Kato Y."/>
            <person name="Yoshizawa T."/>
            <person name="Tanaka T."/>
            <person name="Kudoh Y."/>
            <person name="Yamazaki J."/>
            <person name="Kushida N."/>
            <person name="Oguchi A."/>
            <person name="Aoki K."/>
            <person name="Masuda S."/>
            <person name="Yanagii M."/>
            <person name="Nishimura M."/>
            <person name="Yamagishi A."/>
            <person name="Oshima T."/>
            <person name="Kikuchi H."/>
        </authorList>
    </citation>
    <scope>NUCLEOTIDE SEQUENCE [LARGE SCALE GENOMIC DNA]</scope>
    <source>
        <strain>DSM 16993 / JCM 10545 / NBRC 100140 / 7</strain>
    </source>
</reference>
<keyword id="KW-0342">GTP-binding</keyword>
<keyword id="KW-0378">Hydrolase</keyword>
<keyword id="KW-0396">Initiation factor</keyword>
<keyword id="KW-0460">Magnesium</keyword>
<keyword id="KW-0479">Metal-binding</keyword>
<keyword id="KW-0547">Nucleotide-binding</keyword>
<keyword id="KW-0648">Protein biosynthesis</keyword>
<keyword id="KW-1185">Reference proteome</keyword>
<keyword id="KW-0862">Zinc</keyword>
<organism>
    <name type="scientific">Sulfurisphaera tokodaii (strain DSM 16993 / JCM 10545 / NBRC 100140 / 7)</name>
    <name type="common">Sulfolobus tokodaii</name>
    <dbReference type="NCBI Taxonomy" id="273063"/>
    <lineage>
        <taxon>Archaea</taxon>
        <taxon>Thermoproteota</taxon>
        <taxon>Thermoprotei</taxon>
        <taxon>Sulfolobales</taxon>
        <taxon>Sulfolobaceae</taxon>
        <taxon>Sulfurisphaera</taxon>
    </lineage>
</organism>
<sequence length="418" mass="45979">MSWPQVQPEVNIGVVGHVDHGKTTLVQAITGVWTSKHSEELKRGMTIKLGYAEASIGVCPNCNKPEAYVTEYSCNQCGSDEKPQFLRKVSFIDAPGHEILMATMLSGAALMDGALLVVAANEPFPQPQTREHFVALGIVNIKNLIIVQNKVDVVSKEEALKQYKQIKEFLKGTWAEDAPIIPVSALHKINIDALIEGIQKYIPTPQRDLSKDPIMLVIRSFDVNKPGTPYNELKGGVIGGSIIQGKLEIGDEIKILPGLRHEKPGGKVEYEPLYTTITSIRFSDLEVKEAKPGGLVALGTELDPSYVKADSLVGSVVVKSSNKNVSVLWNLKIENYQLLERVVGAKELVKVENIKKGEVLMLTLGSATTLGVAKNIKNDELEVELKRPLVVWDKDLRVVISRQVSGRWRLVGWGIIKI</sequence>
<dbReference type="EC" id="3.6.5.3" evidence="1"/>
<dbReference type="EMBL" id="BA000023">
    <property type="protein sequence ID" value="BAK54258.1"/>
    <property type="molecule type" value="Genomic_DNA"/>
</dbReference>
<dbReference type="RefSeq" id="WP_052846878.1">
    <property type="nucleotide sequence ID" value="NC_003106.2"/>
</dbReference>
<dbReference type="SMR" id="Q975N8"/>
<dbReference type="STRING" id="273063.STK_03810"/>
<dbReference type="GeneID" id="95643524"/>
<dbReference type="KEGG" id="sto:STK_03810"/>
<dbReference type="PATRIC" id="fig|273063.9.peg.442"/>
<dbReference type="eggNOG" id="arCOG01563">
    <property type="taxonomic scope" value="Archaea"/>
</dbReference>
<dbReference type="OrthoDB" id="7798at2157"/>
<dbReference type="Proteomes" id="UP000001015">
    <property type="component" value="Chromosome"/>
</dbReference>
<dbReference type="GO" id="GO:0005829">
    <property type="term" value="C:cytosol"/>
    <property type="evidence" value="ECO:0007669"/>
    <property type="project" value="TreeGrafter"/>
</dbReference>
<dbReference type="GO" id="GO:0005525">
    <property type="term" value="F:GTP binding"/>
    <property type="evidence" value="ECO:0007669"/>
    <property type="project" value="UniProtKB-UniRule"/>
</dbReference>
<dbReference type="GO" id="GO:0003924">
    <property type="term" value="F:GTPase activity"/>
    <property type="evidence" value="ECO:0007669"/>
    <property type="project" value="InterPro"/>
</dbReference>
<dbReference type="GO" id="GO:0046872">
    <property type="term" value="F:metal ion binding"/>
    <property type="evidence" value="ECO:0007669"/>
    <property type="project" value="UniProtKB-KW"/>
</dbReference>
<dbReference type="GO" id="GO:0003746">
    <property type="term" value="F:translation elongation factor activity"/>
    <property type="evidence" value="ECO:0007669"/>
    <property type="project" value="UniProtKB-UniRule"/>
</dbReference>
<dbReference type="GO" id="GO:0003743">
    <property type="term" value="F:translation initiation factor activity"/>
    <property type="evidence" value="ECO:0007669"/>
    <property type="project" value="UniProtKB-KW"/>
</dbReference>
<dbReference type="GO" id="GO:0000049">
    <property type="term" value="F:tRNA binding"/>
    <property type="evidence" value="ECO:0007669"/>
    <property type="project" value="InterPro"/>
</dbReference>
<dbReference type="GO" id="GO:0001731">
    <property type="term" value="P:formation of translation preinitiation complex"/>
    <property type="evidence" value="ECO:0007669"/>
    <property type="project" value="TreeGrafter"/>
</dbReference>
<dbReference type="CDD" id="cd01888">
    <property type="entry name" value="eIF2_gamma"/>
    <property type="match status" value="1"/>
</dbReference>
<dbReference type="CDD" id="cd03688">
    <property type="entry name" value="eIF2_gamma_II"/>
    <property type="match status" value="1"/>
</dbReference>
<dbReference type="CDD" id="cd15490">
    <property type="entry name" value="eIF2_gamma_III"/>
    <property type="match status" value="1"/>
</dbReference>
<dbReference type="FunFam" id="2.40.30.10:FF:000009">
    <property type="entry name" value="Eukaryotic translation initiation factor 2 subunit gamma"/>
    <property type="match status" value="1"/>
</dbReference>
<dbReference type="FunFam" id="3.40.50.300:FF:000065">
    <property type="entry name" value="Eukaryotic translation initiation factor 2 subunit gamma"/>
    <property type="match status" value="1"/>
</dbReference>
<dbReference type="FunFam" id="2.40.30.10:FF:000075">
    <property type="entry name" value="Translation initiation factor 2 subunit gamma"/>
    <property type="match status" value="1"/>
</dbReference>
<dbReference type="Gene3D" id="3.40.50.300">
    <property type="entry name" value="P-loop containing nucleotide triphosphate hydrolases"/>
    <property type="match status" value="1"/>
</dbReference>
<dbReference type="Gene3D" id="2.40.30.10">
    <property type="entry name" value="Translation factors"/>
    <property type="match status" value="2"/>
</dbReference>
<dbReference type="HAMAP" id="MF_00119">
    <property type="entry name" value="eIF_2_gamma"/>
    <property type="match status" value="1"/>
</dbReference>
<dbReference type="InterPro" id="IPR050543">
    <property type="entry name" value="eIF2G"/>
</dbReference>
<dbReference type="InterPro" id="IPR015256">
    <property type="entry name" value="eIF2g_C"/>
</dbReference>
<dbReference type="InterPro" id="IPR044127">
    <property type="entry name" value="eIF2g_dom_2"/>
</dbReference>
<dbReference type="InterPro" id="IPR044128">
    <property type="entry name" value="eIF2g_GTP-bd"/>
</dbReference>
<dbReference type="InterPro" id="IPR027417">
    <property type="entry name" value="P-loop_NTPase"/>
</dbReference>
<dbReference type="InterPro" id="IPR005225">
    <property type="entry name" value="Small_GTP-bd"/>
</dbReference>
<dbReference type="InterPro" id="IPR000795">
    <property type="entry name" value="T_Tr_GTP-bd_dom"/>
</dbReference>
<dbReference type="InterPro" id="IPR022424">
    <property type="entry name" value="TIF2_gsu"/>
</dbReference>
<dbReference type="InterPro" id="IPR009000">
    <property type="entry name" value="Transl_B-barrel_sf"/>
</dbReference>
<dbReference type="InterPro" id="IPR009001">
    <property type="entry name" value="Transl_elong_EF1A/Init_IF2_C"/>
</dbReference>
<dbReference type="NCBIfam" id="TIGR03680">
    <property type="entry name" value="eif2g_arch"/>
    <property type="match status" value="1"/>
</dbReference>
<dbReference type="NCBIfam" id="NF003077">
    <property type="entry name" value="PRK04000.1"/>
    <property type="match status" value="1"/>
</dbReference>
<dbReference type="NCBIfam" id="TIGR00231">
    <property type="entry name" value="small_GTP"/>
    <property type="match status" value="1"/>
</dbReference>
<dbReference type="PANTHER" id="PTHR42854">
    <property type="entry name" value="EUKARYOTIC TRANSLATION INITIATION FACTOR 2 SUBUNIT 3 FAMILY MEMBER"/>
    <property type="match status" value="1"/>
</dbReference>
<dbReference type="PANTHER" id="PTHR42854:SF3">
    <property type="entry name" value="EUKARYOTIC TRANSLATION INITIATION FACTOR 2 SUBUNIT 3-RELATED"/>
    <property type="match status" value="1"/>
</dbReference>
<dbReference type="Pfam" id="PF09173">
    <property type="entry name" value="eIF2_C"/>
    <property type="match status" value="1"/>
</dbReference>
<dbReference type="Pfam" id="PF00009">
    <property type="entry name" value="GTP_EFTU"/>
    <property type="match status" value="1"/>
</dbReference>
<dbReference type="PRINTS" id="PR00315">
    <property type="entry name" value="ELONGATNFCT"/>
</dbReference>
<dbReference type="SUPFAM" id="SSF50465">
    <property type="entry name" value="EF-Tu/eEF-1alpha/eIF2-gamma C-terminal domain"/>
    <property type="match status" value="1"/>
</dbReference>
<dbReference type="SUPFAM" id="SSF52540">
    <property type="entry name" value="P-loop containing nucleoside triphosphate hydrolases"/>
    <property type="match status" value="1"/>
</dbReference>
<dbReference type="SUPFAM" id="SSF50447">
    <property type="entry name" value="Translation proteins"/>
    <property type="match status" value="1"/>
</dbReference>
<dbReference type="PROSITE" id="PS51722">
    <property type="entry name" value="G_TR_2"/>
    <property type="match status" value="1"/>
</dbReference>
<gene>
    <name evidence="1" type="primary">eif2g</name>
    <name type="ordered locus">STK_03810</name>
</gene>
<feature type="chain" id="PRO_0000137464" description="Translation initiation factor 2 subunit gamma">
    <location>
        <begin position="1"/>
        <end position="418"/>
    </location>
</feature>
<feature type="domain" description="tr-type G" evidence="1">
    <location>
        <begin position="7"/>
        <end position="206"/>
    </location>
</feature>
<feature type="region of interest" description="G1" evidence="1">
    <location>
        <begin position="16"/>
        <end position="23"/>
    </location>
</feature>
<feature type="region of interest" description="G2" evidence="1">
    <location>
        <begin position="44"/>
        <end position="48"/>
    </location>
</feature>
<feature type="region of interest" description="G3" evidence="1">
    <location>
        <begin position="93"/>
        <end position="96"/>
    </location>
</feature>
<feature type="region of interest" description="G4" evidence="1">
    <location>
        <begin position="149"/>
        <end position="152"/>
    </location>
</feature>
<feature type="region of interest" description="G5" evidence="1">
    <location>
        <begin position="184"/>
        <end position="186"/>
    </location>
</feature>
<feature type="binding site" evidence="1">
    <location>
        <begin position="19"/>
        <end position="24"/>
    </location>
    <ligand>
        <name>GTP</name>
        <dbReference type="ChEBI" id="CHEBI:37565"/>
    </ligand>
</feature>
<feature type="binding site" evidence="1">
    <location>
        <position position="19"/>
    </location>
    <ligand>
        <name>Mg(2+)</name>
        <dbReference type="ChEBI" id="CHEBI:18420"/>
        <label>2</label>
    </ligand>
</feature>
<feature type="binding site" evidence="1">
    <location>
        <position position="23"/>
    </location>
    <ligand>
        <name>Mg(2+)</name>
        <dbReference type="ChEBI" id="CHEBI:18420"/>
        <label>1</label>
    </ligand>
</feature>
<feature type="binding site" evidence="1">
    <location>
        <position position="44"/>
    </location>
    <ligand>
        <name>Mg(2+)</name>
        <dbReference type="ChEBI" id="CHEBI:18420"/>
        <label>2</label>
    </ligand>
</feature>
<feature type="binding site" evidence="1">
    <location>
        <position position="46"/>
    </location>
    <ligand>
        <name>Mg(2+)</name>
        <dbReference type="ChEBI" id="CHEBI:18420"/>
        <label>1</label>
    </ligand>
</feature>
<feature type="binding site" evidence="1">
    <location>
        <position position="59"/>
    </location>
    <ligand>
        <name>Zn(2+)</name>
        <dbReference type="ChEBI" id="CHEBI:29105"/>
    </ligand>
</feature>
<feature type="binding site" evidence="1">
    <location>
        <position position="62"/>
    </location>
    <ligand>
        <name>Zn(2+)</name>
        <dbReference type="ChEBI" id="CHEBI:29105"/>
    </ligand>
</feature>
<feature type="binding site" evidence="1">
    <location>
        <position position="74"/>
    </location>
    <ligand>
        <name>Zn(2+)</name>
        <dbReference type="ChEBI" id="CHEBI:29105"/>
    </ligand>
</feature>
<feature type="binding site" evidence="1">
    <location>
        <position position="77"/>
    </location>
    <ligand>
        <name>Zn(2+)</name>
        <dbReference type="ChEBI" id="CHEBI:29105"/>
    </ligand>
</feature>
<feature type="binding site" evidence="1">
    <location>
        <begin position="149"/>
        <end position="152"/>
    </location>
    <ligand>
        <name>GTP</name>
        <dbReference type="ChEBI" id="CHEBI:37565"/>
    </ligand>
</feature>
<feature type="binding site" evidence="1">
    <location>
        <begin position="184"/>
        <end position="186"/>
    </location>
    <ligand>
        <name>GTP</name>
        <dbReference type="ChEBI" id="CHEBI:37565"/>
    </ligand>
</feature>
<proteinExistence type="inferred from homology"/>
<accession>Q975N8</accession>
<accession>F9VMW1</accession>
<protein>
    <recommendedName>
        <fullName evidence="1">Translation initiation factor 2 subunit gamma</fullName>
        <ecNumber evidence="1">3.6.5.3</ecNumber>
    </recommendedName>
    <alternativeName>
        <fullName evidence="1">aIF2-gamma</fullName>
    </alternativeName>
    <alternativeName>
        <fullName evidence="1">eIF-2-gamma</fullName>
    </alternativeName>
</protein>